<dbReference type="EMBL" id="BT020894">
    <property type="protein sequence ID" value="AAX08911.1"/>
    <property type="molecule type" value="mRNA"/>
</dbReference>
<dbReference type="EMBL" id="BC123618">
    <property type="protein sequence ID" value="AAI23619.1"/>
    <property type="molecule type" value="mRNA"/>
</dbReference>
<dbReference type="RefSeq" id="NP_001029934.1">
    <property type="nucleotide sequence ID" value="NM_001034762.1"/>
</dbReference>
<dbReference type="SMR" id="Q5E9M6"/>
<dbReference type="FunCoup" id="Q5E9M6">
    <property type="interactions" value="210"/>
</dbReference>
<dbReference type="STRING" id="9913.ENSBTAP00000009085"/>
<dbReference type="GlyCosmos" id="Q5E9M6">
    <property type="glycosylation" value="6 sites, No reported glycans"/>
</dbReference>
<dbReference type="GlyGen" id="Q5E9M6">
    <property type="glycosylation" value="6 sites"/>
</dbReference>
<dbReference type="PaxDb" id="9913-ENSBTAP00000009085"/>
<dbReference type="GeneID" id="614571"/>
<dbReference type="KEGG" id="bta:614571"/>
<dbReference type="CTD" id="30010"/>
<dbReference type="eggNOG" id="ENOG502QQUX">
    <property type="taxonomic scope" value="Eukaryota"/>
</dbReference>
<dbReference type="InParanoid" id="Q5E9M6"/>
<dbReference type="OrthoDB" id="8690369at2759"/>
<dbReference type="Proteomes" id="UP000009136">
    <property type="component" value="Unplaced"/>
</dbReference>
<dbReference type="GO" id="GO:0005576">
    <property type="term" value="C:extracellular region"/>
    <property type="evidence" value="ECO:0007669"/>
    <property type="project" value="UniProtKB-SubCell"/>
</dbReference>
<dbReference type="GO" id="GO:0005102">
    <property type="term" value="F:signaling receptor binding"/>
    <property type="evidence" value="ECO:0000318"/>
    <property type="project" value="GO_Central"/>
</dbReference>
<dbReference type="InterPro" id="IPR010450">
    <property type="entry name" value="Nxph"/>
</dbReference>
<dbReference type="InterPro" id="IPR026845">
    <property type="entry name" value="NXPH/NXPE"/>
</dbReference>
<dbReference type="PANTHER" id="PTHR17103">
    <property type="entry name" value="NEUREXOPHILIN"/>
    <property type="match status" value="1"/>
</dbReference>
<dbReference type="PANTHER" id="PTHR17103:SF13">
    <property type="entry name" value="NEUREXOPHILIN-1"/>
    <property type="match status" value="1"/>
</dbReference>
<dbReference type="Pfam" id="PF06312">
    <property type="entry name" value="Neurexophilin"/>
    <property type="match status" value="1"/>
</dbReference>
<dbReference type="PIRSF" id="PIRSF038019">
    <property type="entry name" value="Neurexophilin"/>
    <property type="match status" value="1"/>
</dbReference>
<gene>
    <name type="primary">NXPH1</name>
</gene>
<protein>
    <recommendedName>
        <fullName>Neurexophilin-1</fullName>
    </recommendedName>
</protein>
<evidence type="ECO:0000250" key="1"/>
<evidence type="ECO:0000255" key="2"/>
<evidence type="ECO:0000305" key="3"/>
<proteinExistence type="evidence at transcript level"/>
<keyword id="KW-0325">Glycoprotein</keyword>
<keyword id="KW-1185">Reference proteome</keyword>
<keyword id="KW-0964">Secreted</keyword>
<keyword id="KW-0732">Signal</keyword>
<feature type="signal peptide" evidence="2">
    <location>
        <begin position="1"/>
        <end position="21"/>
    </location>
</feature>
<feature type="chain" id="PRO_0000250711" description="Neurexophilin-1">
    <location>
        <begin position="22"/>
        <end position="271"/>
    </location>
</feature>
<feature type="region of interest" description="II" evidence="1">
    <location>
        <begin position="22"/>
        <end position="97"/>
    </location>
</feature>
<feature type="region of interest" description="III" evidence="1">
    <location>
        <begin position="98"/>
        <end position="176"/>
    </location>
</feature>
<feature type="region of interest" description="IV (linker domain)" evidence="1">
    <location>
        <begin position="177"/>
        <end position="185"/>
    </location>
</feature>
<feature type="region of interest" description="V (Cys-rich)" evidence="1">
    <location>
        <begin position="186"/>
        <end position="271"/>
    </location>
</feature>
<feature type="glycosylation site" description="N-linked (GlcNAc...) asparagine" evidence="2">
    <location>
        <position position="23"/>
    </location>
</feature>
<feature type="glycosylation site" description="N-linked (GlcNAc...) asparagine" evidence="2">
    <location>
        <position position="68"/>
    </location>
</feature>
<feature type="glycosylation site" description="N-linked (GlcNAc...) asparagine" evidence="2">
    <location>
        <position position="93"/>
    </location>
</feature>
<feature type="glycosylation site" description="N-linked (GlcNAc...) asparagine" evidence="2">
    <location>
        <position position="146"/>
    </location>
</feature>
<feature type="glycosylation site" description="N-linked (GlcNAc...) asparagine" evidence="2">
    <location>
        <position position="156"/>
    </location>
</feature>
<feature type="glycosylation site" description="N-linked (GlcNAc...) asparagine" evidence="2">
    <location>
        <position position="162"/>
    </location>
</feature>
<name>NXPH1_BOVIN</name>
<sequence>MQAACWYVLLLLQPTVYLVTCANLTNGGKSELLKSGGSKSTLKHIWTESSKDLSISRLLSQTFRGKENDTDLDLRYDTPEPYSEQDLWDWLRNSTDLQEPRPRAKRRPIVKTGKFKKMFGWGDFHSNIKTVKLNLLITGKIVDHGNGTFSVYFRHNSTGQGNVSVSLVPPTKIVEFDLAQQTVIDAKDSKSFNCRIEYEKVDKATKNTLCNYDPSKTCYQEQTQSHVSWLCSKPFKVICIYISFYSTDYKLVQKVCPDYNYHSDTPYFPSG</sequence>
<reference key="1">
    <citation type="journal article" date="2005" name="BMC Genomics">
        <title>Characterization of 954 bovine full-CDS cDNA sequences.</title>
        <authorList>
            <person name="Harhay G.P."/>
            <person name="Sonstegard T.S."/>
            <person name="Keele J.W."/>
            <person name="Heaton M.P."/>
            <person name="Clawson M.L."/>
            <person name="Snelling W.M."/>
            <person name="Wiedmann R.T."/>
            <person name="Van Tassell C.P."/>
            <person name="Smith T.P.L."/>
        </authorList>
    </citation>
    <scope>NUCLEOTIDE SEQUENCE [LARGE SCALE MRNA]</scope>
</reference>
<reference key="2">
    <citation type="submission" date="2006-09" db="EMBL/GenBank/DDBJ databases">
        <authorList>
            <consortium name="NIH - Mammalian Gene Collection (MGC) project"/>
        </authorList>
    </citation>
    <scope>NUCLEOTIDE SEQUENCE [LARGE SCALE MRNA]</scope>
    <source>
        <strain>Hereford</strain>
        <tissue>Fetal medulla</tissue>
    </source>
</reference>
<organism>
    <name type="scientific">Bos taurus</name>
    <name type="common">Bovine</name>
    <dbReference type="NCBI Taxonomy" id="9913"/>
    <lineage>
        <taxon>Eukaryota</taxon>
        <taxon>Metazoa</taxon>
        <taxon>Chordata</taxon>
        <taxon>Craniata</taxon>
        <taxon>Vertebrata</taxon>
        <taxon>Euteleostomi</taxon>
        <taxon>Mammalia</taxon>
        <taxon>Eutheria</taxon>
        <taxon>Laurasiatheria</taxon>
        <taxon>Artiodactyla</taxon>
        <taxon>Ruminantia</taxon>
        <taxon>Pecora</taxon>
        <taxon>Bovidae</taxon>
        <taxon>Bovinae</taxon>
        <taxon>Bos</taxon>
    </lineage>
</organism>
<comment type="function">
    <text evidence="1">May be signaling molecules that resemble neuropeptides. Ligand for alpha-neurexins (By similarity).</text>
</comment>
<comment type="subcellular location">
    <subcellularLocation>
        <location evidence="3">Secreted</location>
    </subcellularLocation>
</comment>
<comment type="PTM">
    <text evidence="1">May be proteolytically processed at the boundary between the N-terminal non-conserved and the central conserved domain in neuron-like cells.</text>
</comment>
<comment type="similarity">
    <text evidence="3">Belongs to the neurexophilin family.</text>
</comment>
<accession>Q5E9M6</accession>
<accession>Q08DQ7</accession>